<gene>
    <name evidence="1" type="primary">rpsT</name>
    <name type="ordered locus">RSc2556</name>
    <name type="ORF">RS00735</name>
</gene>
<feature type="chain" id="PRO_0000168017" description="Small ribosomal subunit protein bS20">
    <location>
        <begin position="1"/>
        <end position="88"/>
    </location>
</feature>
<feature type="region of interest" description="Disordered" evidence="2">
    <location>
        <begin position="1"/>
        <end position="20"/>
    </location>
</feature>
<evidence type="ECO:0000255" key="1">
    <source>
        <dbReference type="HAMAP-Rule" id="MF_00500"/>
    </source>
</evidence>
<evidence type="ECO:0000256" key="2">
    <source>
        <dbReference type="SAM" id="MobiDB-lite"/>
    </source>
</evidence>
<evidence type="ECO:0000305" key="3"/>
<accession>Q8XWB8</accession>
<protein>
    <recommendedName>
        <fullName evidence="1">Small ribosomal subunit protein bS20</fullName>
    </recommendedName>
    <alternativeName>
        <fullName evidence="3">30S ribosomal protein S20</fullName>
    </alternativeName>
</protein>
<reference key="1">
    <citation type="journal article" date="2002" name="Nature">
        <title>Genome sequence of the plant pathogen Ralstonia solanacearum.</title>
        <authorList>
            <person name="Salanoubat M."/>
            <person name="Genin S."/>
            <person name="Artiguenave F."/>
            <person name="Gouzy J."/>
            <person name="Mangenot S."/>
            <person name="Arlat M."/>
            <person name="Billault A."/>
            <person name="Brottier P."/>
            <person name="Camus J.-C."/>
            <person name="Cattolico L."/>
            <person name="Chandler M."/>
            <person name="Choisne N."/>
            <person name="Claudel-Renard C."/>
            <person name="Cunnac S."/>
            <person name="Demange N."/>
            <person name="Gaspin C."/>
            <person name="Lavie M."/>
            <person name="Moisan A."/>
            <person name="Robert C."/>
            <person name="Saurin W."/>
            <person name="Schiex T."/>
            <person name="Siguier P."/>
            <person name="Thebault P."/>
            <person name="Whalen M."/>
            <person name="Wincker P."/>
            <person name="Levy M."/>
            <person name="Weissenbach J."/>
            <person name="Boucher C.A."/>
        </authorList>
    </citation>
    <scope>NUCLEOTIDE SEQUENCE [LARGE SCALE GENOMIC DNA]</scope>
    <source>
        <strain>ATCC BAA-1114 / GMI1000</strain>
    </source>
</reference>
<dbReference type="EMBL" id="AL646052">
    <property type="protein sequence ID" value="CAD16263.1"/>
    <property type="molecule type" value="Genomic_DNA"/>
</dbReference>
<dbReference type="RefSeq" id="WP_011002471.1">
    <property type="nucleotide sequence ID" value="NC_003295.1"/>
</dbReference>
<dbReference type="SMR" id="Q8XWB8"/>
<dbReference type="STRING" id="267608.RSc2556"/>
<dbReference type="EnsemblBacteria" id="CAD16263">
    <property type="protein sequence ID" value="CAD16263"/>
    <property type="gene ID" value="RSc2556"/>
</dbReference>
<dbReference type="GeneID" id="93851633"/>
<dbReference type="KEGG" id="rso:RSc2556"/>
<dbReference type="eggNOG" id="COG0268">
    <property type="taxonomic scope" value="Bacteria"/>
</dbReference>
<dbReference type="HOGENOM" id="CLU_160655_4_0_4"/>
<dbReference type="Proteomes" id="UP000001436">
    <property type="component" value="Chromosome"/>
</dbReference>
<dbReference type="GO" id="GO:0005829">
    <property type="term" value="C:cytosol"/>
    <property type="evidence" value="ECO:0007669"/>
    <property type="project" value="TreeGrafter"/>
</dbReference>
<dbReference type="GO" id="GO:0015935">
    <property type="term" value="C:small ribosomal subunit"/>
    <property type="evidence" value="ECO:0007669"/>
    <property type="project" value="TreeGrafter"/>
</dbReference>
<dbReference type="GO" id="GO:0070181">
    <property type="term" value="F:small ribosomal subunit rRNA binding"/>
    <property type="evidence" value="ECO:0007669"/>
    <property type="project" value="TreeGrafter"/>
</dbReference>
<dbReference type="GO" id="GO:0003735">
    <property type="term" value="F:structural constituent of ribosome"/>
    <property type="evidence" value="ECO:0007669"/>
    <property type="project" value="InterPro"/>
</dbReference>
<dbReference type="GO" id="GO:0006412">
    <property type="term" value="P:translation"/>
    <property type="evidence" value="ECO:0007669"/>
    <property type="project" value="UniProtKB-UniRule"/>
</dbReference>
<dbReference type="FunFam" id="1.20.58.110:FF:000001">
    <property type="entry name" value="30S ribosomal protein S20"/>
    <property type="match status" value="1"/>
</dbReference>
<dbReference type="Gene3D" id="1.20.58.110">
    <property type="entry name" value="Ribosomal protein S20"/>
    <property type="match status" value="1"/>
</dbReference>
<dbReference type="HAMAP" id="MF_00500">
    <property type="entry name" value="Ribosomal_bS20"/>
    <property type="match status" value="1"/>
</dbReference>
<dbReference type="InterPro" id="IPR002583">
    <property type="entry name" value="Ribosomal_bS20"/>
</dbReference>
<dbReference type="InterPro" id="IPR036510">
    <property type="entry name" value="Ribosomal_bS20_sf"/>
</dbReference>
<dbReference type="NCBIfam" id="TIGR00029">
    <property type="entry name" value="S20"/>
    <property type="match status" value="1"/>
</dbReference>
<dbReference type="PANTHER" id="PTHR33398">
    <property type="entry name" value="30S RIBOSOMAL PROTEIN S20"/>
    <property type="match status" value="1"/>
</dbReference>
<dbReference type="PANTHER" id="PTHR33398:SF1">
    <property type="entry name" value="SMALL RIBOSOMAL SUBUNIT PROTEIN BS20C"/>
    <property type="match status" value="1"/>
</dbReference>
<dbReference type="Pfam" id="PF01649">
    <property type="entry name" value="Ribosomal_S20p"/>
    <property type="match status" value="1"/>
</dbReference>
<dbReference type="SUPFAM" id="SSF46992">
    <property type="entry name" value="Ribosomal protein S20"/>
    <property type="match status" value="1"/>
</dbReference>
<sequence>MANTAQARKRARQAVVQNAHNSALRSRLRTAVKAVRKAIAGGDKAAAANVFKQAQSTIDSIADKKIVHKNKAARAKSRLSAAIKAMGA</sequence>
<proteinExistence type="inferred from homology"/>
<comment type="function">
    <text evidence="1">Binds directly to 16S ribosomal RNA.</text>
</comment>
<comment type="similarity">
    <text evidence="1">Belongs to the bacterial ribosomal protein bS20 family.</text>
</comment>
<organism>
    <name type="scientific">Ralstonia nicotianae (strain ATCC BAA-1114 / GMI1000)</name>
    <name type="common">Ralstonia solanacearum</name>
    <dbReference type="NCBI Taxonomy" id="267608"/>
    <lineage>
        <taxon>Bacteria</taxon>
        <taxon>Pseudomonadati</taxon>
        <taxon>Pseudomonadota</taxon>
        <taxon>Betaproteobacteria</taxon>
        <taxon>Burkholderiales</taxon>
        <taxon>Burkholderiaceae</taxon>
        <taxon>Ralstonia</taxon>
        <taxon>Ralstonia solanacearum species complex</taxon>
    </lineage>
</organism>
<name>RS20_RALN1</name>
<keyword id="KW-1185">Reference proteome</keyword>
<keyword id="KW-0687">Ribonucleoprotein</keyword>
<keyword id="KW-0689">Ribosomal protein</keyword>
<keyword id="KW-0694">RNA-binding</keyword>
<keyword id="KW-0699">rRNA-binding</keyword>